<reference key="1">
    <citation type="journal article" date="2002" name="Proc. Natl. Acad. Sci. U.S.A.">
        <title>Extensive mosaic structure revealed by the complete genome sequence of uropathogenic Escherichia coli.</title>
        <authorList>
            <person name="Welch R.A."/>
            <person name="Burland V."/>
            <person name="Plunkett G. III"/>
            <person name="Redford P."/>
            <person name="Roesch P."/>
            <person name="Rasko D."/>
            <person name="Buckles E.L."/>
            <person name="Liou S.-R."/>
            <person name="Boutin A."/>
            <person name="Hackett J."/>
            <person name="Stroud D."/>
            <person name="Mayhew G.F."/>
            <person name="Rose D.J."/>
            <person name="Zhou S."/>
            <person name="Schwartz D.C."/>
            <person name="Perna N.T."/>
            <person name="Mobley H.L.T."/>
            <person name="Donnenberg M.S."/>
            <person name="Blattner F.R."/>
        </authorList>
    </citation>
    <scope>NUCLEOTIDE SEQUENCE [LARGE SCALE GENOMIC DNA]</scope>
    <source>
        <strain>CFT073 / ATCC 700928 / UPEC</strain>
    </source>
</reference>
<organism>
    <name type="scientific">Escherichia coli O6:H1 (strain CFT073 / ATCC 700928 / UPEC)</name>
    <dbReference type="NCBI Taxonomy" id="199310"/>
    <lineage>
        <taxon>Bacteria</taxon>
        <taxon>Pseudomonadati</taxon>
        <taxon>Pseudomonadota</taxon>
        <taxon>Gammaproteobacteria</taxon>
        <taxon>Enterobacterales</taxon>
        <taxon>Enterobacteriaceae</taxon>
        <taxon>Escherichia</taxon>
    </lineage>
</organism>
<protein>
    <recommendedName>
        <fullName evidence="2">Trp operon repressor</fullName>
    </recommendedName>
</protein>
<sequence length="108" mass="12341">MAQQSPYSAAMAEQRHQEWLRFVDLLKNAYQNDLHLPLLNLMLTPDEREALGTRVRIVEELLRGEMSQRELKNELGAGIATITRGSNSLKAAPVELRQWLEDVLLKSD</sequence>
<dbReference type="EMBL" id="AE014075">
    <property type="protein sequence ID" value="AAN83900.1"/>
    <property type="molecule type" value="Genomic_DNA"/>
</dbReference>
<dbReference type="RefSeq" id="WP_000068677.1">
    <property type="nucleotide sequence ID" value="NZ_CP051263.1"/>
</dbReference>
<dbReference type="SMR" id="Q8FA42"/>
<dbReference type="STRING" id="199310.c5480"/>
<dbReference type="GeneID" id="89519371"/>
<dbReference type="KEGG" id="ecc:c5480"/>
<dbReference type="eggNOG" id="COG2973">
    <property type="taxonomic scope" value="Bacteria"/>
</dbReference>
<dbReference type="HOGENOM" id="CLU_147939_0_0_6"/>
<dbReference type="BioCyc" id="ECOL199310:C5480-MONOMER"/>
<dbReference type="Proteomes" id="UP000001410">
    <property type="component" value="Chromosome"/>
</dbReference>
<dbReference type="GO" id="GO:0005737">
    <property type="term" value="C:cytoplasm"/>
    <property type="evidence" value="ECO:0007669"/>
    <property type="project" value="UniProtKB-SubCell"/>
</dbReference>
<dbReference type="GO" id="GO:0003700">
    <property type="term" value="F:DNA-binding transcription factor activity"/>
    <property type="evidence" value="ECO:0007669"/>
    <property type="project" value="InterPro"/>
</dbReference>
<dbReference type="GO" id="GO:0043565">
    <property type="term" value="F:sequence-specific DNA binding"/>
    <property type="evidence" value="ECO:0007669"/>
    <property type="project" value="InterPro"/>
</dbReference>
<dbReference type="GO" id="GO:0045892">
    <property type="term" value="P:negative regulation of DNA-templated transcription"/>
    <property type="evidence" value="ECO:0007669"/>
    <property type="project" value="UniProtKB-UniRule"/>
</dbReference>
<dbReference type="FunFam" id="1.10.1270.10:FF:000001">
    <property type="entry name" value="Trp operon repressor"/>
    <property type="match status" value="1"/>
</dbReference>
<dbReference type="Gene3D" id="1.10.1270.10">
    <property type="entry name" value="TrpR-like"/>
    <property type="match status" value="1"/>
</dbReference>
<dbReference type="HAMAP" id="MF_00475">
    <property type="entry name" value="Trp_repressor"/>
    <property type="match status" value="1"/>
</dbReference>
<dbReference type="InterPro" id="IPR000831">
    <property type="entry name" value="Trp_repress"/>
</dbReference>
<dbReference type="InterPro" id="IPR013335">
    <property type="entry name" value="Trp_repress_bac"/>
</dbReference>
<dbReference type="InterPro" id="IPR010921">
    <property type="entry name" value="Trp_repressor/repl_initiator"/>
</dbReference>
<dbReference type="InterPro" id="IPR038116">
    <property type="entry name" value="TrpR-like_sf"/>
</dbReference>
<dbReference type="NCBIfam" id="TIGR01321">
    <property type="entry name" value="TrpR"/>
    <property type="match status" value="1"/>
</dbReference>
<dbReference type="PANTHER" id="PTHR38025">
    <property type="entry name" value="TRP OPERON REPRESSOR"/>
    <property type="match status" value="1"/>
</dbReference>
<dbReference type="PANTHER" id="PTHR38025:SF1">
    <property type="entry name" value="TRP OPERON REPRESSOR"/>
    <property type="match status" value="1"/>
</dbReference>
<dbReference type="Pfam" id="PF01371">
    <property type="entry name" value="Trp_repressor"/>
    <property type="match status" value="1"/>
</dbReference>
<dbReference type="PIRSF" id="PIRSF003196">
    <property type="entry name" value="Trp_repressor"/>
    <property type="match status" value="1"/>
</dbReference>
<dbReference type="SUPFAM" id="SSF48295">
    <property type="entry name" value="TrpR-like"/>
    <property type="match status" value="1"/>
</dbReference>
<feature type="initiator methionine" description="Removed" evidence="1">
    <location>
        <position position="1"/>
    </location>
</feature>
<feature type="chain" id="PRO_0000196496" description="Trp operon repressor">
    <location>
        <begin position="2"/>
        <end position="108"/>
    </location>
</feature>
<feature type="DNA-binding region" evidence="2">
    <location>
        <begin position="68"/>
        <end position="91"/>
    </location>
</feature>
<comment type="function">
    <text evidence="2">This protein is an aporepressor. When complexed with L-tryptophan it binds the operator region of the trp operon (5'-ACTAGT-'3') and prevents the initiation of transcription. The complex also regulates trp repressor biosynthesis by binding to its regulatory region.</text>
</comment>
<comment type="subunit">
    <text evidence="2">Homodimer.</text>
</comment>
<comment type="subcellular location">
    <subcellularLocation>
        <location evidence="2">Cytoplasm</location>
    </subcellularLocation>
</comment>
<comment type="similarity">
    <text evidence="2">Belongs to the TrpR family.</text>
</comment>
<proteinExistence type="inferred from homology"/>
<gene>
    <name evidence="2" type="primary">trpR</name>
    <name type="ordered locus">c5480</name>
</gene>
<evidence type="ECO:0000250" key="1"/>
<evidence type="ECO:0000255" key="2">
    <source>
        <dbReference type="HAMAP-Rule" id="MF_00475"/>
    </source>
</evidence>
<keyword id="KW-0963">Cytoplasm</keyword>
<keyword id="KW-0238">DNA-binding</keyword>
<keyword id="KW-1185">Reference proteome</keyword>
<keyword id="KW-0678">Repressor</keyword>
<keyword id="KW-0804">Transcription</keyword>
<keyword id="KW-0805">Transcription regulation</keyword>
<accession>Q8FA42</accession>
<name>TRPR_ECOL6</name>